<protein>
    <recommendedName>
        <fullName>Inward rectifier potassium channel 2</fullName>
    </recommendedName>
    <alternativeName>
        <fullName>Cardiac inward rectifier potassium channel</fullName>
    </alternativeName>
    <alternativeName>
        <fullName>Inward rectifier K(+) channel Kir2.1</fullName>
        <shortName>IRK-1</shortName>
    </alternativeName>
    <alternativeName>
        <fullName>Potassium channel, inwardly rectifying subfamily J member 2</fullName>
    </alternativeName>
</protein>
<evidence type="ECO:0000250" key="1"/>
<evidence type="ECO:0000250" key="2">
    <source>
        <dbReference type="UniProtKB" id="O19182"/>
    </source>
</evidence>
<evidence type="ECO:0000250" key="3">
    <source>
        <dbReference type="UniProtKB" id="P63252"/>
    </source>
</evidence>
<evidence type="ECO:0000250" key="4">
    <source>
        <dbReference type="UniProtKB" id="Q64273"/>
    </source>
</evidence>
<evidence type="ECO:0000255" key="5"/>
<evidence type="ECO:0000256" key="6">
    <source>
        <dbReference type="SAM" id="MobiDB-lite"/>
    </source>
</evidence>
<evidence type="ECO:0000269" key="7">
    <source>
    </source>
</evidence>
<evidence type="ECO:0000305" key="8"/>
<proteinExistence type="evidence at transcript level"/>
<dbReference type="EMBL" id="Z48971">
    <property type="protein sequence ID" value="CAA88835.1"/>
    <property type="molecule type" value="Genomic_DNA"/>
</dbReference>
<dbReference type="EMBL" id="AF021142">
    <property type="protein sequence ID" value="AAB88800.1"/>
    <property type="molecule type" value="mRNA"/>
</dbReference>
<dbReference type="PIR" id="S52846">
    <property type="entry name" value="S52846"/>
</dbReference>
<dbReference type="RefSeq" id="NP_001166446.1">
    <property type="nucleotide sequence ID" value="NM_001172975.1"/>
</dbReference>
<dbReference type="RefSeq" id="XP_012997745.1">
    <property type="nucleotide sequence ID" value="XM_013142291.1"/>
</dbReference>
<dbReference type="SMR" id="P52185"/>
<dbReference type="FunCoup" id="P52185">
    <property type="interactions" value="517"/>
</dbReference>
<dbReference type="STRING" id="10141.ENSCPOP00000031029"/>
<dbReference type="Ensembl" id="ENSCPOT00000034075.1">
    <property type="protein sequence ID" value="ENSCPOP00000031029.1"/>
    <property type="gene ID" value="ENSCPOG00000004956.4"/>
</dbReference>
<dbReference type="GeneID" id="100135566"/>
<dbReference type="KEGG" id="cpoc:100135566"/>
<dbReference type="CTD" id="3759"/>
<dbReference type="VEuPathDB" id="HostDB:ENSCPOG00000004956"/>
<dbReference type="eggNOG" id="KOG3827">
    <property type="taxonomic scope" value="Eukaryota"/>
</dbReference>
<dbReference type="GeneTree" id="ENSGT01030000234586"/>
<dbReference type="HOGENOM" id="CLU_022738_3_0_1"/>
<dbReference type="InParanoid" id="P52185"/>
<dbReference type="OMA" id="THPEMDH"/>
<dbReference type="OrthoDB" id="273257at2759"/>
<dbReference type="TreeFam" id="TF313676"/>
<dbReference type="Proteomes" id="UP000005447">
    <property type="component" value="Unassembled WGS sequence"/>
</dbReference>
<dbReference type="Bgee" id="ENSCPOG00000004956">
    <property type="expression patterns" value="Expressed in heart left ventricle and 9 other cell types or tissues"/>
</dbReference>
<dbReference type="GO" id="GO:0016020">
    <property type="term" value="C:membrane"/>
    <property type="evidence" value="ECO:0000250"/>
    <property type="project" value="UniProtKB"/>
</dbReference>
<dbReference type="GO" id="GO:0030315">
    <property type="term" value="C:T-tubule"/>
    <property type="evidence" value="ECO:0000250"/>
    <property type="project" value="UniProtKB"/>
</dbReference>
<dbReference type="GO" id="GO:0008076">
    <property type="term" value="C:voltage-gated potassium channel complex"/>
    <property type="evidence" value="ECO:0007669"/>
    <property type="project" value="Ensembl"/>
</dbReference>
<dbReference type="GO" id="GO:0042802">
    <property type="term" value="F:identical protein binding"/>
    <property type="evidence" value="ECO:0007669"/>
    <property type="project" value="Ensembl"/>
</dbReference>
<dbReference type="GO" id="GO:0005242">
    <property type="term" value="F:inward rectifier potassium channel activity"/>
    <property type="evidence" value="ECO:0000314"/>
    <property type="project" value="UniProtKB"/>
</dbReference>
<dbReference type="GO" id="GO:0005546">
    <property type="term" value="F:phosphatidylinositol-4,5-bisphosphate binding"/>
    <property type="evidence" value="ECO:0000250"/>
    <property type="project" value="UniProtKB"/>
</dbReference>
<dbReference type="GO" id="GO:0086008">
    <property type="term" value="F:voltage-gated potassium channel activity involved in cardiac muscle cell action potential repolarization"/>
    <property type="evidence" value="ECO:0007669"/>
    <property type="project" value="Ensembl"/>
</dbReference>
<dbReference type="GO" id="GO:0086002">
    <property type="term" value="P:cardiac muscle cell action potential involved in contraction"/>
    <property type="evidence" value="ECO:0007669"/>
    <property type="project" value="Ensembl"/>
</dbReference>
<dbReference type="GO" id="GO:0015693">
    <property type="term" value="P:magnesium ion transport"/>
    <property type="evidence" value="ECO:0007669"/>
    <property type="project" value="Ensembl"/>
</dbReference>
<dbReference type="GO" id="GO:1990573">
    <property type="term" value="P:potassium ion import across plasma membrane"/>
    <property type="evidence" value="ECO:0007669"/>
    <property type="project" value="Ensembl"/>
</dbReference>
<dbReference type="GO" id="GO:0006813">
    <property type="term" value="P:potassium ion transport"/>
    <property type="evidence" value="ECO:0000250"/>
    <property type="project" value="UniProtKB"/>
</dbReference>
<dbReference type="GO" id="GO:0051289">
    <property type="term" value="P:protein homotetramerization"/>
    <property type="evidence" value="ECO:0000250"/>
    <property type="project" value="UniProtKB"/>
</dbReference>
<dbReference type="GO" id="GO:0086091">
    <property type="term" value="P:regulation of heart rate by cardiac conduction"/>
    <property type="evidence" value="ECO:0007669"/>
    <property type="project" value="Ensembl"/>
</dbReference>
<dbReference type="GO" id="GO:0060306">
    <property type="term" value="P:regulation of membrane repolarization"/>
    <property type="evidence" value="ECO:0007669"/>
    <property type="project" value="Ensembl"/>
</dbReference>
<dbReference type="GO" id="GO:0034765">
    <property type="term" value="P:regulation of monoatomic ion transmembrane transport"/>
    <property type="evidence" value="ECO:0007669"/>
    <property type="project" value="TreeGrafter"/>
</dbReference>
<dbReference type="GO" id="GO:0014861">
    <property type="term" value="P:regulation of skeletal muscle contraction via regulation of action potential"/>
    <property type="evidence" value="ECO:0007669"/>
    <property type="project" value="Ensembl"/>
</dbReference>
<dbReference type="GO" id="GO:0055119">
    <property type="term" value="P:relaxation of cardiac muscle"/>
    <property type="evidence" value="ECO:0007669"/>
    <property type="project" value="Ensembl"/>
</dbReference>
<dbReference type="GO" id="GO:0090076">
    <property type="term" value="P:relaxation of skeletal muscle"/>
    <property type="evidence" value="ECO:0007669"/>
    <property type="project" value="Ensembl"/>
</dbReference>
<dbReference type="FunFam" id="1.10.287.70:FF:000039">
    <property type="entry name" value="ATP-sensitive inward rectifier potassium channel 12"/>
    <property type="match status" value="1"/>
</dbReference>
<dbReference type="FunFam" id="2.60.40.1400:FF:000001">
    <property type="entry name" value="G protein-activated inward rectifier potassium channel 2"/>
    <property type="match status" value="1"/>
</dbReference>
<dbReference type="Gene3D" id="1.10.287.70">
    <property type="match status" value="1"/>
</dbReference>
<dbReference type="Gene3D" id="2.60.40.1400">
    <property type="entry name" value="G protein-activated inward rectifier potassium channel 1"/>
    <property type="match status" value="1"/>
</dbReference>
<dbReference type="InterPro" id="IPR014756">
    <property type="entry name" value="Ig_E-set"/>
</dbReference>
<dbReference type="InterPro" id="IPR041647">
    <property type="entry name" value="IRK_C"/>
</dbReference>
<dbReference type="InterPro" id="IPR016449">
    <property type="entry name" value="K_chnl_inward-rec_Kir"/>
</dbReference>
<dbReference type="InterPro" id="IPR003271">
    <property type="entry name" value="K_chnl_inward-rec_Kir2.1"/>
</dbReference>
<dbReference type="InterPro" id="IPR013518">
    <property type="entry name" value="K_chnl_inward-rec_Kir_cyto"/>
</dbReference>
<dbReference type="InterPro" id="IPR013673">
    <property type="entry name" value="K_chnl_inward-rec_Kir_N"/>
</dbReference>
<dbReference type="InterPro" id="IPR040445">
    <property type="entry name" value="Kir_TM"/>
</dbReference>
<dbReference type="PANTHER" id="PTHR11767">
    <property type="entry name" value="INWARD RECTIFIER POTASSIUM CHANNEL"/>
    <property type="match status" value="1"/>
</dbReference>
<dbReference type="PANTHER" id="PTHR11767:SF43">
    <property type="entry name" value="INWARD RECTIFIER POTASSIUM CHANNEL 2"/>
    <property type="match status" value="1"/>
</dbReference>
<dbReference type="Pfam" id="PF01007">
    <property type="entry name" value="IRK"/>
    <property type="match status" value="1"/>
</dbReference>
<dbReference type="Pfam" id="PF17655">
    <property type="entry name" value="IRK_C"/>
    <property type="match status" value="1"/>
</dbReference>
<dbReference type="Pfam" id="PF08466">
    <property type="entry name" value="IRK_N"/>
    <property type="match status" value="1"/>
</dbReference>
<dbReference type="PIRSF" id="PIRSF005465">
    <property type="entry name" value="GIRK_kir"/>
    <property type="match status" value="1"/>
</dbReference>
<dbReference type="PRINTS" id="PR01324">
    <property type="entry name" value="KIR21CHANNEL"/>
</dbReference>
<dbReference type="PRINTS" id="PR01320">
    <property type="entry name" value="KIRCHANNEL"/>
</dbReference>
<dbReference type="SUPFAM" id="SSF81296">
    <property type="entry name" value="E set domains"/>
    <property type="match status" value="1"/>
</dbReference>
<dbReference type="SUPFAM" id="SSF81324">
    <property type="entry name" value="Voltage-gated potassium channels"/>
    <property type="match status" value="1"/>
</dbReference>
<accession>P52185</accession>
<sequence length="427" mass="48318">MGSVRTNRYSIVSSEEDGMKLATMAVANGFGNGKSKVHTRQQCRSRFVKKDGHCNVQFINVGEKGQRYLADIFTTCVDIRWRWMLVIFCLAFVLSWLFFGCVFWLIALLHGDLDASKESKACVSEVNSFTAAFLFSIETQTTIGYGFRCVTDECPIAVFMVVFQSIVGCIIDAFIIGAVMAKMAKPKKRNETLVFSHNAVIAMRDGKLCLMWRVGNLRKSHLVEAHVRAQLLKSRITSEGEYIPLDQIDINVGFDSGIDRIFLVSPITIVHEIDEDSPLYDLSKQDIDNADFEIVVILEGMVEATAMTTQCRSSYLANEILWGHRYEPVLFEEKHYYKVDYSRFHKTYEVPNTPLCSARDLAEKKYILSNANSFCYENEVALTSKEEDDSENGVPESTSTDTPPDIDLHNQASVPLEPRPLRRESEI</sequence>
<gene>
    <name type="primary">KCNJ2</name>
    <name type="synonym">IRK1</name>
</gene>
<feature type="chain" id="PRO_0000154922" description="Inward rectifier potassium channel 2">
    <location>
        <begin position="1"/>
        <end position="427"/>
    </location>
</feature>
<feature type="topological domain" description="Cytoplasmic" evidence="1">
    <location>
        <begin position="1"/>
        <end position="81"/>
    </location>
</feature>
<feature type="transmembrane region" description="Helical; Name=M1" evidence="1">
    <location>
        <begin position="82"/>
        <end position="106"/>
    </location>
</feature>
<feature type="topological domain" description="Extracellular" evidence="1">
    <location>
        <begin position="107"/>
        <end position="128"/>
    </location>
</feature>
<feature type="intramembrane region" description="Helical; Pore-forming; Name=H5" evidence="1">
    <location>
        <begin position="129"/>
        <end position="140"/>
    </location>
</feature>
<feature type="intramembrane region" description="Pore-forming" evidence="1">
    <location>
        <begin position="141"/>
        <end position="147"/>
    </location>
</feature>
<feature type="topological domain" description="Extracellular" evidence="1">
    <location>
        <begin position="148"/>
        <end position="156"/>
    </location>
</feature>
<feature type="transmembrane region" description="Helical; Name=M2" evidence="1">
    <location>
        <begin position="157"/>
        <end position="178"/>
    </location>
</feature>
<feature type="topological domain" description="Cytoplasmic" evidence="1">
    <location>
        <begin position="179"/>
        <end position="427"/>
    </location>
</feature>
<feature type="region of interest" description="Polyphosphoinositide (PIP2)-binding" evidence="4">
    <location>
        <begin position="181"/>
        <end position="208"/>
    </location>
</feature>
<feature type="region of interest" description="Disordered" evidence="6">
    <location>
        <begin position="384"/>
        <end position="427"/>
    </location>
</feature>
<feature type="short sequence motif" description="Selectivity filter" evidence="1">
    <location>
        <begin position="142"/>
        <end position="147"/>
    </location>
</feature>
<feature type="short sequence motif" description="PDZ-binding" evidence="5">
    <location>
        <begin position="425"/>
        <end position="427"/>
    </location>
</feature>
<feature type="site" description="Role in the control of polyamine-mediated channel gating and in the blocking by intracellular magnesium" evidence="1">
    <location>
        <position position="172"/>
    </location>
</feature>
<feature type="modified residue" description="S-nitrosocysteine" evidence="3">
    <location>
        <position position="76"/>
    </location>
</feature>
<organism>
    <name type="scientific">Cavia porcellus</name>
    <name type="common">Guinea pig</name>
    <dbReference type="NCBI Taxonomy" id="10141"/>
    <lineage>
        <taxon>Eukaryota</taxon>
        <taxon>Metazoa</taxon>
        <taxon>Chordata</taxon>
        <taxon>Craniata</taxon>
        <taxon>Vertebrata</taxon>
        <taxon>Euteleostomi</taxon>
        <taxon>Mammalia</taxon>
        <taxon>Eutheria</taxon>
        <taxon>Euarchontoglires</taxon>
        <taxon>Glires</taxon>
        <taxon>Rodentia</taxon>
        <taxon>Hystricomorpha</taxon>
        <taxon>Caviidae</taxon>
        <taxon>Cavia</taxon>
    </lineage>
</organism>
<comment type="function">
    <text evidence="3 7">Inward rectifier potassium channels are characterized by a greater tendency to allow potassium to flow into the cell rather than out of it. Their voltage dependence is regulated by the concentration of extracellular potassium; as external potassium is raised, the voltage range of the channel opening shifts to more positive voltages. The inward rectification is mainly due to the blockage of outward current by internal magnesium. Blocked by external barium or cesium (PubMed:8534918). Probably participates in establishing action potential waveform and excitability of neuronal and muscle tissues (By similarity).</text>
</comment>
<comment type="catalytic activity">
    <reaction evidence="7">
        <text>K(+)(in) = K(+)(out)</text>
        <dbReference type="Rhea" id="RHEA:29463"/>
        <dbReference type="ChEBI" id="CHEBI:29103"/>
    </reaction>
</comment>
<comment type="activity regulation">
    <text evidence="4">Activated by phosphatidylinositol 4,5 biphosphate (PtdIns(4,5)P2).</text>
</comment>
<comment type="subunit">
    <text evidence="3 4">Homotetramer. Homomultimeric and heteromultimeric association with KCNJ4/Kir2.3. Can form heteromeric channels with Kir2.6/KCNJ18 (By similarity). Associates, via its PDZ-recognition domain, with a complex containing LIN7A, LIN7B, LIN7C, DLG1, CASK and APBA1.</text>
</comment>
<comment type="subcellular location">
    <subcellularLocation>
        <location evidence="2">Cell membrane</location>
        <topology evidence="5">Multi-pass membrane protein</topology>
    </subcellularLocation>
    <subcellularLocation>
        <location evidence="4">Cell membrane</location>
        <location evidence="4">Sarcolemma</location>
        <location evidence="4">T-tubule</location>
    </subcellularLocation>
</comment>
<comment type="PTM">
    <text evidence="3">S-nitrosylation increases the open probability and inward rectifying currents.</text>
</comment>
<comment type="similarity">
    <text evidence="8">Belongs to the inward rectifier-type potassium channel (TC 1.A.2.1) family. KCNJ2 subfamily.</text>
</comment>
<keyword id="KW-1003">Cell membrane</keyword>
<keyword id="KW-0407">Ion channel</keyword>
<keyword id="KW-0406">Ion transport</keyword>
<keyword id="KW-0472">Membrane</keyword>
<keyword id="KW-0630">Potassium</keyword>
<keyword id="KW-0633">Potassium transport</keyword>
<keyword id="KW-1185">Reference proteome</keyword>
<keyword id="KW-0702">S-nitrosylation</keyword>
<keyword id="KW-0812">Transmembrane</keyword>
<keyword id="KW-1133">Transmembrane helix</keyword>
<keyword id="KW-0813">Transport</keyword>
<keyword id="KW-0851">Voltage-gated channel</keyword>
<name>KCNJ2_CAVPO</name>
<reference key="1">
    <citation type="journal article" date="1995" name="Mol. Biol. Cell">
        <title>Functional expression of a vertebrate inwardly rectifying K+ channel in yeast.</title>
        <authorList>
            <person name="Tang W."/>
            <person name="Ruknudin A."/>
            <person name="Yang W.-P."/>
            <person name="Shaw S.-Y."/>
            <person name="Knickerbocker A."/>
            <person name="Kurtz S."/>
        </authorList>
    </citation>
    <scope>NUCLEOTIDE SEQUENCE [GENOMIC DNA]</scope>
    <scope>FUNCTION</scope>
    <scope>TRANSPORTER ACTIVITY</scope>
    <source>
        <strain>Hartley</strain>
        <tissue>Heart</tissue>
    </source>
</reference>
<reference key="2">
    <citation type="journal article" date="1998" name="Exp. Eye Res.">
        <title>Inwardly rectifying potassium channels in lens epithelium are from the IRK1 (Kir 2.1) family.</title>
        <authorList>
            <person name="Rae J.L."/>
            <person name="Shepard A.R."/>
        </authorList>
    </citation>
    <scope>NUCLEOTIDE SEQUENCE [MRNA]</scope>
    <source>
        <tissue>Lens epithelium</tissue>
    </source>
</reference>